<proteinExistence type="inferred from homology"/>
<gene>
    <name evidence="1" type="primary">rplP</name>
    <name type="ordered locus">Smlt0913</name>
</gene>
<comment type="function">
    <text evidence="1">Binds 23S rRNA and is also seen to make contacts with the A and possibly P site tRNAs.</text>
</comment>
<comment type="subunit">
    <text evidence="1">Part of the 50S ribosomal subunit.</text>
</comment>
<comment type="similarity">
    <text evidence="1">Belongs to the universal ribosomal protein uL16 family.</text>
</comment>
<evidence type="ECO:0000255" key="1">
    <source>
        <dbReference type="HAMAP-Rule" id="MF_01342"/>
    </source>
</evidence>
<evidence type="ECO:0000305" key="2"/>
<accession>B2FQ52</accession>
<keyword id="KW-1185">Reference proteome</keyword>
<keyword id="KW-0687">Ribonucleoprotein</keyword>
<keyword id="KW-0689">Ribosomal protein</keyword>
<keyword id="KW-0694">RNA-binding</keyword>
<keyword id="KW-0699">rRNA-binding</keyword>
<keyword id="KW-0820">tRNA-binding</keyword>
<organism>
    <name type="scientific">Stenotrophomonas maltophilia (strain K279a)</name>
    <dbReference type="NCBI Taxonomy" id="522373"/>
    <lineage>
        <taxon>Bacteria</taxon>
        <taxon>Pseudomonadati</taxon>
        <taxon>Pseudomonadota</taxon>
        <taxon>Gammaproteobacteria</taxon>
        <taxon>Lysobacterales</taxon>
        <taxon>Lysobacteraceae</taxon>
        <taxon>Stenotrophomonas</taxon>
        <taxon>Stenotrophomonas maltophilia group</taxon>
    </lineage>
</organism>
<feature type="chain" id="PRO_1000143034" description="Large ribosomal subunit protein uL16">
    <location>
        <begin position="1"/>
        <end position="137"/>
    </location>
</feature>
<sequence>MLQPKRTKYRKVHKGRNDGLSWSANAVSFGEYGLKATAHGQLTARQIEAARRSISRYVKRGGKMWIRVFPDKPITKKPIEVRMGSGKGNVEYWVAQIQPGRMIYEIEGVSEEVAREAFRLAAAKLSVTTTFVTRTVR</sequence>
<reference key="1">
    <citation type="journal article" date="2008" name="Genome Biol.">
        <title>The complete genome, comparative and functional analysis of Stenotrophomonas maltophilia reveals an organism heavily shielded by drug resistance determinants.</title>
        <authorList>
            <person name="Crossman L.C."/>
            <person name="Gould V.C."/>
            <person name="Dow J.M."/>
            <person name="Vernikos G.S."/>
            <person name="Okazaki A."/>
            <person name="Sebaihia M."/>
            <person name="Saunders D."/>
            <person name="Arrowsmith C."/>
            <person name="Carver T."/>
            <person name="Peters N."/>
            <person name="Adlem E."/>
            <person name="Kerhornou A."/>
            <person name="Lord A."/>
            <person name="Murphy L."/>
            <person name="Seeger K."/>
            <person name="Squares R."/>
            <person name="Rutter S."/>
            <person name="Quail M.A."/>
            <person name="Rajandream M.A."/>
            <person name="Harris D."/>
            <person name="Churcher C."/>
            <person name="Bentley S.D."/>
            <person name="Parkhill J."/>
            <person name="Thomson N.R."/>
            <person name="Avison M.B."/>
        </authorList>
    </citation>
    <scope>NUCLEOTIDE SEQUENCE [LARGE SCALE GENOMIC DNA]</scope>
    <source>
        <strain>K279a</strain>
    </source>
</reference>
<name>RL16_STRMK</name>
<protein>
    <recommendedName>
        <fullName evidence="1">Large ribosomal subunit protein uL16</fullName>
    </recommendedName>
    <alternativeName>
        <fullName evidence="2">50S ribosomal protein L16</fullName>
    </alternativeName>
</protein>
<dbReference type="EMBL" id="AM743169">
    <property type="protein sequence ID" value="CAQ44482.1"/>
    <property type="molecule type" value="Genomic_DNA"/>
</dbReference>
<dbReference type="RefSeq" id="WP_004154486.1">
    <property type="nucleotide sequence ID" value="NC_010943.1"/>
</dbReference>
<dbReference type="SMR" id="B2FQ52"/>
<dbReference type="EnsemblBacteria" id="CAQ44482">
    <property type="protein sequence ID" value="CAQ44482"/>
    <property type="gene ID" value="Smlt0913"/>
</dbReference>
<dbReference type="GeneID" id="97259941"/>
<dbReference type="KEGG" id="sml:Smlt0913"/>
<dbReference type="eggNOG" id="COG0197">
    <property type="taxonomic scope" value="Bacteria"/>
</dbReference>
<dbReference type="HOGENOM" id="CLU_078858_2_1_6"/>
<dbReference type="Proteomes" id="UP000008840">
    <property type="component" value="Chromosome"/>
</dbReference>
<dbReference type="GO" id="GO:0022625">
    <property type="term" value="C:cytosolic large ribosomal subunit"/>
    <property type="evidence" value="ECO:0007669"/>
    <property type="project" value="TreeGrafter"/>
</dbReference>
<dbReference type="GO" id="GO:0019843">
    <property type="term" value="F:rRNA binding"/>
    <property type="evidence" value="ECO:0007669"/>
    <property type="project" value="UniProtKB-UniRule"/>
</dbReference>
<dbReference type="GO" id="GO:0003735">
    <property type="term" value="F:structural constituent of ribosome"/>
    <property type="evidence" value="ECO:0007669"/>
    <property type="project" value="InterPro"/>
</dbReference>
<dbReference type="GO" id="GO:0000049">
    <property type="term" value="F:tRNA binding"/>
    <property type="evidence" value="ECO:0007669"/>
    <property type="project" value="UniProtKB-KW"/>
</dbReference>
<dbReference type="GO" id="GO:0006412">
    <property type="term" value="P:translation"/>
    <property type="evidence" value="ECO:0007669"/>
    <property type="project" value="UniProtKB-UniRule"/>
</dbReference>
<dbReference type="CDD" id="cd01433">
    <property type="entry name" value="Ribosomal_L16_L10e"/>
    <property type="match status" value="1"/>
</dbReference>
<dbReference type="FunFam" id="3.90.1170.10:FF:000001">
    <property type="entry name" value="50S ribosomal protein L16"/>
    <property type="match status" value="1"/>
</dbReference>
<dbReference type="Gene3D" id="3.90.1170.10">
    <property type="entry name" value="Ribosomal protein L10e/L16"/>
    <property type="match status" value="1"/>
</dbReference>
<dbReference type="HAMAP" id="MF_01342">
    <property type="entry name" value="Ribosomal_uL16"/>
    <property type="match status" value="1"/>
</dbReference>
<dbReference type="InterPro" id="IPR047873">
    <property type="entry name" value="Ribosomal_uL16"/>
</dbReference>
<dbReference type="InterPro" id="IPR000114">
    <property type="entry name" value="Ribosomal_uL16_bact-type"/>
</dbReference>
<dbReference type="InterPro" id="IPR020798">
    <property type="entry name" value="Ribosomal_uL16_CS"/>
</dbReference>
<dbReference type="InterPro" id="IPR016180">
    <property type="entry name" value="Ribosomal_uL16_dom"/>
</dbReference>
<dbReference type="InterPro" id="IPR036920">
    <property type="entry name" value="Ribosomal_uL16_sf"/>
</dbReference>
<dbReference type="NCBIfam" id="TIGR01164">
    <property type="entry name" value="rplP_bact"/>
    <property type="match status" value="1"/>
</dbReference>
<dbReference type="PANTHER" id="PTHR12220">
    <property type="entry name" value="50S/60S RIBOSOMAL PROTEIN L16"/>
    <property type="match status" value="1"/>
</dbReference>
<dbReference type="PANTHER" id="PTHR12220:SF13">
    <property type="entry name" value="LARGE RIBOSOMAL SUBUNIT PROTEIN UL16M"/>
    <property type="match status" value="1"/>
</dbReference>
<dbReference type="Pfam" id="PF00252">
    <property type="entry name" value="Ribosomal_L16"/>
    <property type="match status" value="1"/>
</dbReference>
<dbReference type="PRINTS" id="PR00060">
    <property type="entry name" value="RIBOSOMALL16"/>
</dbReference>
<dbReference type="SUPFAM" id="SSF54686">
    <property type="entry name" value="Ribosomal protein L16p/L10e"/>
    <property type="match status" value="1"/>
</dbReference>
<dbReference type="PROSITE" id="PS00586">
    <property type="entry name" value="RIBOSOMAL_L16_1"/>
    <property type="match status" value="1"/>
</dbReference>
<dbReference type="PROSITE" id="PS00701">
    <property type="entry name" value="RIBOSOMAL_L16_2"/>
    <property type="match status" value="1"/>
</dbReference>